<accession>D3ZQD3</accession>
<gene>
    <name evidence="9" type="primary">Ogdhl</name>
</gene>
<sequence length="1010" mass="114637">MSQLRLLLFRLGPQARKLLATRDIAAFGGRRRSSGPPTTIPRSRGGVSPSYVEEMYFAWLENPQSVHKSWDNFFQRATKEASVGPAQPQPPAVIQESRASVSSCTKTSKLVEDHLAVQSLIRAYQIRGHHVAQLDPLGILDADLDSFVPSDLITTIDKLAFYDLQEADLDKEFRLPTTTFIGGSENTLSLREIIRRLESTYCQHIGLEFMFINDVEQCQWIRQKFETPGVMKFSIEEKRTLLARLVRSMRFEDFLARKWSSEKRFGLEGCEVMIPALKTIIDKSSEMGVENVILGMPHRGRLNVLANVIRKDLEQIFCQFDPKLEAADEGSGDVKYHLGMYHERINRVTNRNITLSLVANPSHLEAVDPVVQGKTKAEQFYRGDAQGRKVMSILVHGDAAFAGQGVVYETFHLSDLPSYTTNGTVHVVVNNQIGFTTDPRMARSSPYPTDVARVVNAPIFHVNADDPEAVIYVCSVAAEWRNTFNKDVVVDLVCYRRRGHNEMDEPMFTQPLMYKQIHKQVPVLKKYADKLIAEGTVTLQEFEEEIAKYDRICEEAYGRSKDKKILHIKHWLDSPWPGFFNVDGEPKSMTYPTTGIPEDTLSHIGNVASSVPLEDFKIHTGLSRILRGRADMTKKRTVDWALAEYMAFGSLLKEGIHVRLSGQDVERGTFSHRHHVLHDQDVDRRTCVPMNHLWPDQAPYTVCNSSLSEYGVLGFELGYAMASPNALVLWEAQFGDFHNTAQCIIDQFISTGQAKWVRHNGIVLLLPHGMEGMGPEHSSARPERFLQMSNDDSDAYPVFTEDFEVSQLYDCNWIVVNCSTPASYFHVLRRQVLLPFRKPLIVFTPKSLLRHPDAKSSFDQMVSGTSFQRMIPEDGPAAQSPERVERLIFCTGKVYYDLVKERSSQGLEKQVAITRLEQISPFPFDLIMREAEKYSGAELVWCQEEHKNMGYYDYISPRFMTLLGHSRPIWYVGREPAAAPATGNKNTHLVSLRKFLDTAFNLKAFEGKTF</sequence>
<keyword id="KW-0106">Calcium</keyword>
<keyword id="KW-0324">Glycolysis</keyword>
<keyword id="KW-0460">Magnesium</keyword>
<keyword id="KW-0479">Metal-binding</keyword>
<keyword id="KW-0496">Mitochondrion</keyword>
<keyword id="KW-0560">Oxidoreductase</keyword>
<keyword id="KW-1185">Reference proteome</keyword>
<keyword id="KW-0786">Thiamine pyrophosphate</keyword>
<keyword id="KW-0809">Transit peptide</keyword>
<comment type="function">
    <text evidence="2 8">2-oxoglutarate dehydrogenase (E1-like) component of the 2-oxoglutarate dehydrogenase multienzyme complex (OGDHC) which mediates the decarboxylation of alpha-ketoglutarate in the tricarboxylic acid cycle (PubMed:18783430). The OGDHC complex catalyzes the overall conversion of 2-oxoglutarate to succinyl-CoA and CO(2) while reducing NAD(+) to NADH (PubMed:18783430). The OGDHC complex is mainly active in the mitochondrion (PubMed:18783430). Involved in the inhibition of cell proliferation and in apoptosis (By similarity).</text>
</comment>
<comment type="catalytic activity">
    <reaction evidence="8">
        <text>N(6)-[(R)-lipoyl]-L-lysyl-[protein] + 2-oxoglutarate + H(+) = N(6)-[(R)-S(8)-succinyldihydrolipoyl]-L-lysyl-[protein] + CO2</text>
        <dbReference type="Rhea" id="RHEA:12188"/>
        <dbReference type="Rhea" id="RHEA-COMP:10474"/>
        <dbReference type="Rhea" id="RHEA-COMP:20092"/>
        <dbReference type="ChEBI" id="CHEBI:15378"/>
        <dbReference type="ChEBI" id="CHEBI:16526"/>
        <dbReference type="ChEBI" id="CHEBI:16810"/>
        <dbReference type="ChEBI" id="CHEBI:83099"/>
        <dbReference type="ChEBI" id="CHEBI:83120"/>
        <dbReference type="EC" id="1.2.4.2"/>
    </reaction>
    <physiologicalReaction direction="left-to-right" evidence="8">
        <dbReference type="Rhea" id="RHEA:12189"/>
    </physiologicalReaction>
</comment>
<comment type="cofactor">
    <cofactor evidence="1">
        <name>thiamine diphosphate</name>
        <dbReference type="ChEBI" id="CHEBI:58937"/>
    </cofactor>
    <cofactor evidence="1">
        <name>Mg(2+)</name>
        <dbReference type="ChEBI" id="CHEBI:18420"/>
    </cofactor>
</comment>
<comment type="subunit">
    <text evidence="8">The OGDHC complex comprises multiple copies of three catalytic enzyme components, the 2-oxoglutarate dehydrogenase (OGDH/E1), the dihydrolipoamide dehydrogenase (DLST/E2) and the dihydrolipoamide dehydrogenase (DLD/E3) (Probable). OGDHL/E1-like isoenzyme may replace OGDH in the OGDHC complex in the brain. The presence of either ODGH/E1 or ODGHL/E1-like isoenzyme in the complex may depend on its tissular distribution (Probable).</text>
</comment>
<comment type="subcellular location">
    <subcellularLocation>
        <location evidence="2">Mitochondrion matrix</location>
    </subcellularLocation>
</comment>
<comment type="tissue specificity">
    <text evidence="5">The OGDHL-containing OGDHC complex is present in the brain, but not in the heart.</text>
</comment>
<comment type="similarity">
    <text evidence="7">Belongs to the alpha-ketoglutarate dehydrogenase family.</text>
</comment>
<reference key="1">
    <citation type="journal article" date="2004" name="Nature">
        <title>Genome sequence of the Brown Norway rat yields insights into mammalian evolution.</title>
        <authorList>
            <person name="Gibbs R.A."/>
            <person name="Weinstock G.M."/>
            <person name="Metzker M.L."/>
            <person name="Muzny D.M."/>
            <person name="Sodergren E.J."/>
            <person name="Scherer S."/>
            <person name="Scott G."/>
            <person name="Steffen D."/>
            <person name="Worley K.C."/>
            <person name="Burch P.E."/>
            <person name="Okwuonu G."/>
            <person name="Hines S."/>
            <person name="Lewis L."/>
            <person name="Deramo C."/>
            <person name="Delgado O."/>
            <person name="Dugan-Rocha S."/>
            <person name="Miner G."/>
            <person name="Morgan M."/>
            <person name="Hawes A."/>
            <person name="Gill R."/>
            <person name="Holt R.A."/>
            <person name="Adams M.D."/>
            <person name="Amanatides P.G."/>
            <person name="Baden-Tillson H."/>
            <person name="Barnstead M."/>
            <person name="Chin S."/>
            <person name="Evans C.A."/>
            <person name="Ferriera S."/>
            <person name="Fosler C."/>
            <person name="Glodek A."/>
            <person name="Gu Z."/>
            <person name="Jennings D."/>
            <person name="Kraft C.L."/>
            <person name="Nguyen T."/>
            <person name="Pfannkoch C.M."/>
            <person name="Sitter C."/>
            <person name="Sutton G.G."/>
            <person name="Venter J.C."/>
            <person name="Woodage T."/>
            <person name="Smith D."/>
            <person name="Lee H.-M."/>
            <person name="Gustafson E."/>
            <person name="Cahill P."/>
            <person name="Kana A."/>
            <person name="Doucette-Stamm L."/>
            <person name="Weinstock K."/>
            <person name="Fechtel K."/>
            <person name="Weiss R.B."/>
            <person name="Dunn D.M."/>
            <person name="Green E.D."/>
            <person name="Blakesley R.W."/>
            <person name="Bouffard G.G."/>
            <person name="De Jong P.J."/>
            <person name="Osoegawa K."/>
            <person name="Zhu B."/>
            <person name="Marra M."/>
            <person name="Schein J."/>
            <person name="Bosdet I."/>
            <person name="Fjell C."/>
            <person name="Jones S."/>
            <person name="Krzywinski M."/>
            <person name="Mathewson C."/>
            <person name="Siddiqui A."/>
            <person name="Wye N."/>
            <person name="McPherson J."/>
            <person name="Zhao S."/>
            <person name="Fraser C.M."/>
            <person name="Shetty J."/>
            <person name="Shatsman S."/>
            <person name="Geer K."/>
            <person name="Chen Y."/>
            <person name="Abramzon S."/>
            <person name="Nierman W.C."/>
            <person name="Havlak P.H."/>
            <person name="Chen R."/>
            <person name="Durbin K.J."/>
            <person name="Egan A."/>
            <person name="Ren Y."/>
            <person name="Song X.-Z."/>
            <person name="Li B."/>
            <person name="Liu Y."/>
            <person name="Qin X."/>
            <person name="Cawley S."/>
            <person name="Cooney A.J."/>
            <person name="D'Souza L.M."/>
            <person name="Martin K."/>
            <person name="Wu J.Q."/>
            <person name="Gonzalez-Garay M.L."/>
            <person name="Jackson A.R."/>
            <person name="Kalafus K.J."/>
            <person name="McLeod M.P."/>
            <person name="Milosavljevic A."/>
            <person name="Virk D."/>
            <person name="Volkov A."/>
            <person name="Wheeler D.A."/>
            <person name="Zhang Z."/>
            <person name="Bailey J.A."/>
            <person name="Eichler E.E."/>
            <person name="Tuzun E."/>
            <person name="Birney E."/>
            <person name="Mongin E."/>
            <person name="Ureta-Vidal A."/>
            <person name="Woodwark C."/>
            <person name="Zdobnov E."/>
            <person name="Bork P."/>
            <person name="Suyama M."/>
            <person name="Torrents D."/>
            <person name="Alexandersson M."/>
            <person name="Trask B.J."/>
            <person name="Young J.M."/>
            <person name="Huang H."/>
            <person name="Wang H."/>
            <person name="Xing H."/>
            <person name="Daniels S."/>
            <person name="Gietzen D."/>
            <person name="Schmidt J."/>
            <person name="Stevens K."/>
            <person name="Vitt U."/>
            <person name="Wingrove J."/>
            <person name="Camara F."/>
            <person name="Mar Alba M."/>
            <person name="Abril J.F."/>
            <person name="Guigo R."/>
            <person name="Smit A."/>
            <person name="Dubchak I."/>
            <person name="Rubin E.M."/>
            <person name="Couronne O."/>
            <person name="Poliakov A."/>
            <person name="Huebner N."/>
            <person name="Ganten D."/>
            <person name="Goesele C."/>
            <person name="Hummel O."/>
            <person name="Kreitler T."/>
            <person name="Lee Y.-A."/>
            <person name="Monti J."/>
            <person name="Schulz H."/>
            <person name="Zimdahl H."/>
            <person name="Himmelbauer H."/>
            <person name="Lehrach H."/>
            <person name="Jacob H.J."/>
            <person name="Bromberg S."/>
            <person name="Gullings-Handley J."/>
            <person name="Jensen-Seaman M.I."/>
            <person name="Kwitek A.E."/>
            <person name="Lazar J."/>
            <person name="Pasko D."/>
            <person name="Tonellato P.J."/>
            <person name="Twigger S."/>
            <person name="Ponting C.P."/>
            <person name="Duarte J.M."/>
            <person name="Rice S."/>
            <person name="Goodstadt L."/>
            <person name="Beatson S.A."/>
            <person name="Emes R.D."/>
            <person name="Winter E.E."/>
            <person name="Webber C."/>
            <person name="Brandt P."/>
            <person name="Nyakatura G."/>
            <person name="Adetobi M."/>
            <person name="Chiaromonte F."/>
            <person name="Elnitski L."/>
            <person name="Eswara P."/>
            <person name="Hardison R.C."/>
            <person name="Hou M."/>
            <person name="Kolbe D."/>
            <person name="Makova K."/>
            <person name="Miller W."/>
            <person name="Nekrutenko A."/>
            <person name="Riemer C."/>
            <person name="Schwartz S."/>
            <person name="Taylor J."/>
            <person name="Yang S."/>
            <person name="Zhang Y."/>
            <person name="Lindpaintner K."/>
            <person name="Andrews T.D."/>
            <person name="Caccamo M."/>
            <person name="Clamp M."/>
            <person name="Clarke L."/>
            <person name="Curwen V."/>
            <person name="Durbin R.M."/>
            <person name="Eyras E."/>
            <person name="Searle S.M."/>
            <person name="Cooper G.M."/>
            <person name="Batzoglou S."/>
            <person name="Brudno M."/>
            <person name="Sidow A."/>
            <person name="Stone E.A."/>
            <person name="Payseur B.A."/>
            <person name="Bourque G."/>
            <person name="Lopez-Otin C."/>
            <person name="Puente X.S."/>
            <person name="Chakrabarti K."/>
            <person name="Chatterji S."/>
            <person name="Dewey C."/>
            <person name="Pachter L."/>
            <person name="Bray N."/>
            <person name="Yap V.B."/>
            <person name="Caspi A."/>
            <person name="Tesler G."/>
            <person name="Pevzner P.A."/>
            <person name="Haussler D."/>
            <person name="Roskin K.M."/>
            <person name="Baertsch R."/>
            <person name="Clawson H."/>
            <person name="Furey T.S."/>
            <person name="Hinrichs A.S."/>
            <person name="Karolchik D."/>
            <person name="Kent W.J."/>
            <person name="Rosenbloom K.R."/>
            <person name="Trumbower H."/>
            <person name="Weirauch M."/>
            <person name="Cooper D.N."/>
            <person name="Stenson P.D."/>
            <person name="Ma B."/>
            <person name="Brent M."/>
            <person name="Arumugam M."/>
            <person name="Shteynberg D."/>
            <person name="Copley R.R."/>
            <person name="Taylor M.S."/>
            <person name="Riethman H."/>
            <person name="Mudunuri U."/>
            <person name="Peterson J."/>
            <person name="Guyer M."/>
            <person name="Felsenfeld A."/>
            <person name="Old S."/>
            <person name="Mockrin S."/>
            <person name="Collins F.S."/>
        </authorList>
    </citation>
    <scope>NUCLEOTIDE SEQUENCE [LARGE SCALE GENOMIC DNA]</scope>
    <source>
        <strain>Brown Norway</strain>
    </source>
</reference>
<reference key="2">
    <citation type="journal article" date="2008" name="FEBS J.">
        <title>Novel isoenzyme of 2-oxoglutarate dehydrogenase is identified in brain, but not in heart.</title>
        <authorList>
            <person name="Bunik V."/>
            <person name="Kaehne T."/>
            <person name="Degtyarev D."/>
            <person name="Shcherbakova T."/>
            <person name="Reiser G."/>
        </authorList>
    </citation>
    <scope>FUNCTION</scope>
    <scope>CATALYTIC ACTIVITY</scope>
    <scope>SUBUNIT</scope>
    <scope>TISSUE SPECIFICITY</scope>
</reference>
<dbReference type="EC" id="1.2.4.2" evidence="8"/>
<dbReference type="EMBL" id="AABR07024604">
    <property type="status" value="NOT_ANNOTATED_CDS"/>
    <property type="molecule type" value="Genomic_DNA"/>
</dbReference>
<dbReference type="RefSeq" id="NP_001382038.1">
    <property type="nucleotide sequence ID" value="NM_001395109.1"/>
</dbReference>
<dbReference type="RefSeq" id="XP_006252646.1">
    <property type="nucleotide sequence ID" value="XM_006252584.3"/>
</dbReference>
<dbReference type="RefSeq" id="XP_038950198.1">
    <property type="nucleotide sequence ID" value="XM_039094270.2"/>
</dbReference>
<dbReference type="SMR" id="D3ZQD3"/>
<dbReference type="FunCoup" id="D3ZQD3">
    <property type="interactions" value="1080"/>
</dbReference>
<dbReference type="STRING" id="10116.ENSRNOP00000027054"/>
<dbReference type="PhosphoSitePlus" id="D3ZQD3"/>
<dbReference type="jPOST" id="D3ZQD3"/>
<dbReference type="PaxDb" id="10116-ENSRNOP00000027054"/>
<dbReference type="PeptideAtlas" id="D3ZQD3"/>
<dbReference type="GeneID" id="290566"/>
<dbReference type="UCSC" id="RGD:1310916">
    <property type="organism name" value="rat"/>
</dbReference>
<dbReference type="AGR" id="RGD:1310916"/>
<dbReference type="RGD" id="1310916">
    <property type="gene designation" value="Ogdhl"/>
</dbReference>
<dbReference type="VEuPathDB" id="HostDB:ENSRNOG00000019955"/>
<dbReference type="eggNOG" id="KOG0450">
    <property type="taxonomic scope" value="Eukaryota"/>
</dbReference>
<dbReference type="HOGENOM" id="CLU_004709_1_1_1"/>
<dbReference type="InParanoid" id="D3ZQD3"/>
<dbReference type="TreeFam" id="TF300695"/>
<dbReference type="PRO" id="PR:D3ZQD3"/>
<dbReference type="Proteomes" id="UP000002494">
    <property type="component" value="Chromosome 16"/>
</dbReference>
<dbReference type="Bgee" id="ENSRNOG00000019955">
    <property type="expression patterns" value="Expressed in frontal cortex and 18 other cell types or tissues"/>
</dbReference>
<dbReference type="GO" id="GO:0005759">
    <property type="term" value="C:mitochondrial matrix"/>
    <property type="evidence" value="ECO:0000250"/>
    <property type="project" value="UniProtKB"/>
</dbReference>
<dbReference type="GO" id="GO:0005739">
    <property type="term" value="C:mitochondrion"/>
    <property type="evidence" value="ECO:0000318"/>
    <property type="project" value="GO_Central"/>
</dbReference>
<dbReference type="GO" id="GO:0045252">
    <property type="term" value="C:oxoglutarate dehydrogenase complex"/>
    <property type="evidence" value="ECO:0000318"/>
    <property type="project" value="GO_Central"/>
</dbReference>
<dbReference type="GO" id="GO:0046872">
    <property type="term" value="F:metal ion binding"/>
    <property type="evidence" value="ECO:0007669"/>
    <property type="project" value="UniProtKB-KW"/>
</dbReference>
<dbReference type="GO" id="GO:0004591">
    <property type="term" value="F:oxoglutarate dehydrogenase (succinyl-transferring) activity"/>
    <property type="evidence" value="ECO:0000318"/>
    <property type="project" value="GO_Central"/>
</dbReference>
<dbReference type="GO" id="GO:0030976">
    <property type="term" value="F:thiamine pyrophosphate binding"/>
    <property type="evidence" value="ECO:0007669"/>
    <property type="project" value="InterPro"/>
</dbReference>
<dbReference type="GO" id="GO:0006103">
    <property type="term" value="P:2-oxoglutarate metabolic process"/>
    <property type="evidence" value="ECO:0000314"/>
    <property type="project" value="UniProtKB"/>
</dbReference>
<dbReference type="GO" id="GO:0006096">
    <property type="term" value="P:glycolytic process"/>
    <property type="evidence" value="ECO:0007669"/>
    <property type="project" value="UniProtKB-KW"/>
</dbReference>
<dbReference type="GO" id="GO:0006099">
    <property type="term" value="P:tricarboxylic acid cycle"/>
    <property type="evidence" value="ECO:0000314"/>
    <property type="project" value="UniProtKB"/>
</dbReference>
<dbReference type="CDD" id="cd02016">
    <property type="entry name" value="TPP_E1_OGDC_like"/>
    <property type="match status" value="1"/>
</dbReference>
<dbReference type="FunFam" id="3.40.50.970:FF:000002">
    <property type="entry name" value="2-oxoglutarate dehydrogenase, E1 component"/>
    <property type="match status" value="1"/>
</dbReference>
<dbReference type="FunFam" id="3.40.50.11610:FF:000003">
    <property type="entry name" value="2-oxoglutarate dehydrogenase, isoform X4"/>
    <property type="match status" value="1"/>
</dbReference>
<dbReference type="FunFam" id="1.10.287.1150:FF:000001">
    <property type="entry name" value="2-oxoglutarate dehydrogenase, mitochondrial isoform X1"/>
    <property type="match status" value="1"/>
</dbReference>
<dbReference type="FunFam" id="3.40.50.12470:FF:000001">
    <property type="entry name" value="2-oxoglutarate dehydrogenase, mitochondrial isoform X1"/>
    <property type="match status" value="1"/>
</dbReference>
<dbReference type="Gene3D" id="3.40.50.12470">
    <property type="match status" value="1"/>
</dbReference>
<dbReference type="Gene3D" id="3.40.50.970">
    <property type="match status" value="1"/>
</dbReference>
<dbReference type="Gene3D" id="3.40.50.11610">
    <property type="entry name" value="Multifunctional 2-oxoglutarate metabolism enzyme, C-terminal domain"/>
    <property type="match status" value="1"/>
</dbReference>
<dbReference type="Gene3D" id="1.10.287.1150">
    <property type="entry name" value="TPP helical domain"/>
    <property type="match status" value="1"/>
</dbReference>
<dbReference type="InterPro" id="IPR032106">
    <property type="entry name" value="2-oxogl_dehyd_N"/>
</dbReference>
<dbReference type="InterPro" id="IPR011603">
    <property type="entry name" value="2oxoglutarate_DH_E1"/>
</dbReference>
<dbReference type="InterPro" id="IPR001017">
    <property type="entry name" value="DH_E1"/>
</dbReference>
<dbReference type="InterPro" id="IPR042179">
    <property type="entry name" value="KGD_C_sf"/>
</dbReference>
<dbReference type="InterPro" id="IPR031717">
    <property type="entry name" value="ODO-1/KGD_C"/>
</dbReference>
<dbReference type="InterPro" id="IPR029061">
    <property type="entry name" value="THDP-binding"/>
</dbReference>
<dbReference type="InterPro" id="IPR005475">
    <property type="entry name" value="Transketolase-like_Pyr-bd"/>
</dbReference>
<dbReference type="NCBIfam" id="TIGR00239">
    <property type="entry name" value="2oxo_dh_E1"/>
    <property type="match status" value="1"/>
</dbReference>
<dbReference type="NCBIfam" id="NF006914">
    <property type="entry name" value="PRK09404.1"/>
    <property type="match status" value="1"/>
</dbReference>
<dbReference type="NCBIfam" id="NF008907">
    <property type="entry name" value="PRK12270.1"/>
    <property type="match status" value="1"/>
</dbReference>
<dbReference type="PANTHER" id="PTHR23152">
    <property type="entry name" value="2-OXOGLUTARATE DEHYDROGENASE"/>
    <property type="match status" value="1"/>
</dbReference>
<dbReference type="PANTHER" id="PTHR23152:SF5">
    <property type="entry name" value="2-OXOGLUTARATE DEHYDROGENASE-LIKE, MITOCHONDRIAL"/>
    <property type="match status" value="1"/>
</dbReference>
<dbReference type="Pfam" id="PF16078">
    <property type="entry name" value="2-oxogl_dehyd_N"/>
    <property type="match status" value="1"/>
</dbReference>
<dbReference type="Pfam" id="PF00676">
    <property type="entry name" value="E1_dh"/>
    <property type="match status" value="1"/>
</dbReference>
<dbReference type="Pfam" id="PF16870">
    <property type="entry name" value="OxoGdeHyase_C"/>
    <property type="match status" value="1"/>
</dbReference>
<dbReference type="Pfam" id="PF02779">
    <property type="entry name" value="Transket_pyr"/>
    <property type="match status" value="1"/>
</dbReference>
<dbReference type="PIRSF" id="PIRSF000157">
    <property type="entry name" value="Oxoglu_dh_E1"/>
    <property type="match status" value="1"/>
</dbReference>
<dbReference type="SMART" id="SM00861">
    <property type="entry name" value="Transket_pyr"/>
    <property type="match status" value="1"/>
</dbReference>
<dbReference type="SUPFAM" id="SSF52518">
    <property type="entry name" value="Thiamin diphosphate-binding fold (THDP-binding)"/>
    <property type="match status" value="2"/>
</dbReference>
<feature type="transit peptide" description="Mitochondrion" evidence="3">
    <location>
        <begin position="1"/>
        <end position="107"/>
    </location>
</feature>
<feature type="chain" id="PRO_0000452343" description="2-oxoglutarate dehydrogenase-like, mitochondrial" evidence="3">
    <location>
        <begin position="108"/>
        <end position="1010"/>
    </location>
</feature>
<feature type="region of interest" description="Disordered" evidence="4">
    <location>
        <begin position="28"/>
        <end position="47"/>
    </location>
</feature>
<feature type="binding site" evidence="1">
    <location>
        <position position="130"/>
    </location>
    <ligand>
        <name>Ca(2+)</name>
        <dbReference type="ChEBI" id="CHEBI:29108"/>
    </ligand>
</feature>
<feature type="binding site" evidence="1">
    <location>
        <position position="143"/>
    </location>
    <ligand>
        <name>Ca(2+)</name>
        <dbReference type="ChEBI" id="CHEBI:29108"/>
    </ligand>
</feature>
<feature type="binding site" evidence="1">
    <location>
        <position position="145"/>
    </location>
    <ligand>
        <name>Ca(2+)</name>
        <dbReference type="ChEBI" id="CHEBI:29108"/>
    </ligand>
</feature>
<feature type="binding site" evidence="1">
    <location>
        <position position="299"/>
    </location>
    <ligand>
        <name>thiamine diphosphate</name>
        <dbReference type="ChEBI" id="CHEBI:58937"/>
    </ligand>
</feature>
<feature type="binding site" evidence="1">
    <location>
        <position position="398"/>
    </location>
    <ligand>
        <name>Mg(2+)</name>
        <dbReference type="ChEBI" id="CHEBI:18420"/>
    </ligand>
</feature>
<feature type="binding site" evidence="1">
    <location>
        <position position="398"/>
    </location>
    <ligand>
        <name>thiamine diphosphate</name>
        <dbReference type="ChEBI" id="CHEBI:58937"/>
    </ligand>
</feature>
<feature type="binding site" evidence="1">
    <location>
        <position position="431"/>
    </location>
    <ligand>
        <name>Mg(2+)</name>
        <dbReference type="ChEBI" id="CHEBI:18420"/>
    </ligand>
</feature>
<feature type="binding site" evidence="1">
    <location>
        <position position="431"/>
    </location>
    <ligand>
        <name>thiamine diphosphate</name>
        <dbReference type="ChEBI" id="CHEBI:58937"/>
    </ligand>
</feature>
<feature type="binding site" evidence="1">
    <location>
        <position position="433"/>
    </location>
    <ligand>
        <name>Mg(2+)</name>
        <dbReference type="ChEBI" id="CHEBI:18420"/>
    </ligand>
</feature>
<feature type="binding site" evidence="1">
    <location>
        <position position="433"/>
    </location>
    <ligand>
        <name>thiamine diphosphate</name>
        <dbReference type="ChEBI" id="CHEBI:58937"/>
    </ligand>
</feature>
<feature type="binding site" evidence="1">
    <location>
        <position position="663"/>
    </location>
    <ligand>
        <name>thiamine diphosphate</name>
        <dbReference type="ChEBI" id="CHEBI:58937"/>
    </ligand>
</feature>
<proteinExistence type="evidence at protein level"/>
<organism>
    <name type="scientific">Rattus norvegicus</name>
    <name type="common">Rat</name>
    <dbReference type="NCBI Taxonomy" id="10116"/>
    <lineage>
        <taxon>Eukaryota</taxon>
        <taxon>Metazoa</taxon>
        <taxon>Chordata</taxon>
        <taxon>Craniata</taxon>
        <taxon>Vertebrata</taxon>
        <taxon>Euteleostomi</taxon>
        <taxon>Mammalia</taxon>
        <taxon>Eutheria</taxon>
        <taxon>Euarchontoglires</taxon>
        <taxon>Glires</taxon>
        <taxon>Rodentia</taxon>
        <taxon>Myomorpha</taxon>
        <taxon>Muroidea</taxon>
        <taxon>Muridae</taxon>
        <taxon>Murinae</taxon>
        <taxon>Rattus</taxon>
    </lineage>
</organism>
<protein>
    <recommendedName>
        <fullName evidence="6">2-oxoglutarate dehydrogenase-like, mitochondrial</fullName>
        <ecNumber evidence="8">1.2.4.2</ecNumber>
    </recommendedName>
    <alternativeName>
        <fullName evidence="6">2-oxoglutarate dehydrogenase complex component E1-like</fullName>
        <shortName evidence="6">OGDC-E1-like</shortName>
    </alternativeName>
    <alternativeName>
        <fullName>Alpha-ketoglutarate dehydrogenase-like</fullName>
    </alternativeName>
</protein>
<evidence type="ECO:0000250" key="1">
    <source>
        <dbReference type="UniProtKB" id="Q02218"/>
    </source>
</evidence>
<evidence type="ECO:0000250" key="2">
    <source>
        <dbReference type="UniProtKB" id="Q9ULD0"/>
    </source>
</evidence>
<evidence type="ECO:0000255" key="3"/>
<evidence type="ECO:0000256" key="4">
    <source>
        <dbReference type="SAM" id="MobiDB-lite"/>
    </source>
</evidence>
<evidence type="ECO:0000269" key="5">
    <source>
    </source>
</evidence>
<evidence type="ECO:0000303" key="6">
    <source>
    </source>
</evidence>
<evidence type="ECO:0000305" key="7"/>
<evidence type="ECO:0000305" key="8">
    <source>
    </source>
</evidence>
<evidence type="ECO:0000312" key="9">
    <source>
        <dbReference type="RGD" id="1310916"/>
    </source>
</evidence>
<name>OGDHL_RAT</name>